<accession>G3V7L5</accession>
<evidence type="ECO:0000250" key="1">
    <source>
        <dbReference type="UniProtKB" id="Q12837"/>
    </source>
</evidence>
<evidence type="ECO:0000250" key="2">
    <source>
        <dbReference type="UniProtKB" id="Q63934"/>
    </source>
</evidence>
<evidence type="ECO:0000255" key="3">
    <source>
        <dbReference type="PROSITE-ProRule" id="PRU00108"/>
    </source>
</evidence>
<evidence type="ECO:0000255" key="4">
    <source>
        <dbReference type="PROSITE-ProRule" id="PRU00530"/>
    </source>
</evidence>
<evidence type="ECO:0000256" key="5">
    <source>
        <dbReference type="SAM" id="MobiDB-lite"/>
    </source>
</evidence>
<evidence type="ECO:0000269" key="6">
    <source>
    </source>
</evidence>
<evidence type="ECO:0000269" key="7">
    <source>
    </source>
</evidence>
<evidence type="ECO:0000303" key="8">
    <source>
    </source>
</evidence>
<evidence type="ECO:0000305" key="9"/>
<evidence type="ECO:0000312" key="10">
    <source>
        <dbReference type="RGD" id="620075"/>
    </source>
</evidence>
<feature type="chain" id="PRO_0000438269" description="POU domain, class 4, transcription factor 2">
    <location>
        <begin position="1"/>
        <end position="412"/>
    </location>
</feature>
<feature type="domain" description="POU-specific" evidence="4">
    <location>
        <begin position="253"/>
        <end position="330"/>
    </location>
</feature>
<feature type="DNA-binding region" description="Homeobox" evidence="3">
    <location>
        <begin position="348"/>
        <end position="407"/>
    </location>
</feature>
<feature type="region of interest" description="Disordered" evidence="5">
    <location>
        <begin position="29"/>
        <end position="96"/>
    </location>
</feature>
<feature type="region of interest" description="Required for transcriptional activation" evidence="2">
    <location>
        <begin position="94"/>
        <end position="240"/>
    </location>
</feature>
<feature type="region of interest" description="Disordered" evidence="5">
    <location>
        <begin position="123"/>
        <end position="191"/>
    </location>
</feature>
<feature type="region of interest" description="Required for DNA-binding and transcriptional repression" evidence="2">
    <location>
        <begin position="241"/>
        <end position="412"/>
    </location>
</feature>
<feature type="short sequence motif" description="POU-IV box">
    <location>
        <begin position="113"/>
        <end position="122"/>
    </location>
</feature>
<feature type="short sequence motif" description="Nuclear speckle targeting signal" evidence="1">
    <location>
        <begin position="174"/>
        <end position="188"/>
    </location>
</feature>
<feature type="compositionally biased region" description="Low complexity" evidence="5">
    <location>
        <begin position="31"/>
        <end position="53"/>
    </location>
</feature>
<feature type="compositionally biased region" description="Gly residues" evidence="5">
    <location>
        <begin position="54"/>
        <end position="70"/>
    </location>
</feature>
<feature type="compositionally biased region" description="Gly residues" evidence="5">
    <location>
        <begin position="78"/>
        <end position="87"/>
    </location>
</feature>
<feature type="compositionally biased region" description="Basic residues" evidence="5">
    <location>
        <begin position="127"/>
        <end position="138"/>
    </location>
</feature>
<feature type="compositionally biased region" description="Low complexity" evidence="5">
    <location>
        <begin position="152"/>
        <end position="169"/>
    </location>
</feature>
<feature type="compositionally biased region" description="Basic residues" evidence="5">
    <location>
        <begin position="173"/>
        <end position="187"/>
    </location>
</feature>
<sequence>MMMMSLNSKQAFSMPHAGSLHVEPKYSALHSASPGSSAPAAPSASSPSSSSNAGSGGGGGGGGGGGGGGRSSSSSSSGSGGGGGGGSEAMRRACLPTPPSNIFGGLDESLLARAEALAAVDIVSQSKSHHHHPPHHSPFKPDATYHTMNTIPCTSAASSSSVPISHPSALAGTHHHHHHHHHHHHQPHQALEGELLEHLSPGLALGAMAGPDGTVVSTPAHAPHMATMNPMHQAALSMAHAHGLPSHMGCMSDVDADPRDLEAFAERFKQRRIKLGVTQADVGSALANLKIPGVGSLSQSTICRFESLTLSHNNMIALKPILQAWLEEAEKSHREKLTKPELFNGAEKKRKRTSIAAPEKRSLEAYFAIQPRPSSEKIAAIAEKLDLKKNVVRVWFCNQRQKQKRMKYSAGI</sequence>
<proteinExistence type="evidence at protein level"/>
<reference key="1">
    <citation type="journal article" date="2004" name="Nature">
        <title>Genome sequence of the Brown Norway rat yields insights into mammalian evolution.</title>
        <authorList>
            <person name="Gibbs R.A."/>
            <person name="Weinstock G.M."/>
            <person name="Metzker M.L."/>
            <person name="Muzny D.M."/>
            <person name="Sodergren E.J."/>
            <person name="Scherer S."/>
            <person name="Scott G."/>
            <person name="Steffen D."/>
            <person name="Worley K.C."/>
            <person name="Burch P.E."/>
            <person name="Okwuonu G."/>
            <person name="Hines S."/>
            <person name="Lewis L."/>
            <person name="Deramo C."/>
            <person name="Delgado O."/>
            <person name="Dugan-Rocha S."/>
            <person name="Miner G."/>
            <person name="Morgan M."/>
            <person name="Hawes A."/>
            <person name="Gill R."/>
            <person name="Holt R.A."/>
            <person name="Adams M.D."/>
            <person name="Amanatides P.G."/>
            <person name="Baden-Tillson H."/>
            <person name="Barnstead M."/>
            <person name="Chin S."/>
            <person name="Evans C.A."/>
            <person name="Ferriera S."/>
            <person name="Fosler C."/>
            <person name="Glodek A."/>
            <person name="Gu Z."/>
            <person name="Jennings D."/>
            <person name="Kraft C.L."/>
            <person name="Nguyen T."/>
            <person name="Pfannkoch C.M."/>
            <person name="Sitter C."/>
            <person name="Sutton G.G."/>
            <person name="Venter J.C."/>
            <person name="Woodage T."/>
            <person name="Smith D."/>
            <person name="Lee H.-M."/>
            <person name="Gustafson E."/>
            <person name="Cahill P."/>
            <person name="Kana A."/>
            <person name="Doucette-Stamm L."/>
            <person name="Weinstock K."/>
            <person name="Fechtel K."/>
            <person name="Weiss R.B."/>
            <person name="Dunn D.M."/>
            <person name="Green E.D."/>
            <person name="Blakesley R.W."/>
            <person name="Bouffard G.G."/>
            <person name="De Jong P.J."/>
            <person name="Osoegawa K."/>
            <person name="Zhu B."/>
            <person name="Marra M."/>
            <person name="Schein J."/>
            <person name="Bosdet I."/>
            <person name="Fjell C."/>
            <person name="Jones S."/>
            <person name="Krzywinski M."/>
            <person name="Mathewson C."/>
            <person name="Siddiqui A."/>
            <person name="Wye N."/>
            <person name="McPherson J."/>
            <person name="Zhao S."/>
            <person name="Fraser C.M."/>
            <person name="Shetty J."/>
            <person name="Shatsman S."/>
            <person name="Geer K."/>
            <person name="Chen Y."/>
            <person name="Abramzon S."/>
            <person name="Nierman W.C."/>
            <person name="Havlak P.H."/>
            <person name="Chen R."/>
            <person name="Durbin K.J."/>
            <person name="Egan A."/>
            <person name="Ren Y."/>
            <person name="Song X.-Z."/>
            <person name="Li B."/>
            <person name="Liu Y."/>
            <person name="Qin X."/>
            <person name="Cawley S."/>
            <person name="Cooney A.J."/>
            <person name="D'Souza L.M."/>
            <person name="Martin K."/>
            <person name="Wu J.Q."/>
            <person name="Gonzalez-Garay M.L."/>
            <person name="Jackson A.R."/>
            <person name="Kalafus K.J."/>
            <person name="McLeod M.P."/>
            <person name="Milosavljevic A."/>
            <person name="Virk D."/>
            <person name="Volkov A."/>
            <person name="Wheeler D.A."/>
            <person name="Zhang Z."/>
            <person name="Bailey J.A."/>
            <person name="Eichler E.E."/>
            <person name="Tuzun E."/>
            <person name="Birney E."/>
            <person name="Mongin E."/>
            <person name="Ureta-Vidal A."/>
            <person name="Woodwark C."/>
            <person name="Zdobnov E."/>
            <person name="Bork P."/>
            <person name="Suyama M."/>
            <person name="Torrents D."/>
            <person name="Alexandersson M."/>
            <person name="Trask B.J."/>
            <person name="Young J.M."/>
            <person name="Huang H."/>
            <person name="Wang H."/>
            <person name="Xing H."/>
            <person name="Daniels S."/>
            <person name="Gietzen D."/>
            <person name="Schmidt J."/>
            <person name="Stevens K."/>
            <person name="Vitt U."/>
            <person name="Wingrove J."/>
            <person name="Camara F."/>
            <person name="Mar Alba M."/>
            <person name="Abril J.F."/>
            <person name="Guigo R."/>
            <person name="Smit A."/>
            <person name="Dubchak I."/>
            <person name="Rubin E.M."/>
            <person name="Couronne O."/>
            <person name="Poliakov A."/>
            <person name="Huebner N."/>
            <person name="Ganten D."/>
            <person name="Goesele C."/>
            <person name="Hummel O."/>
            <person name="Kreitler T."/>
            <person name="Lee Y.-A."/>
            <person name="Monti J."/>
            <person name="Schulz H."/>
            <person name="Zimdahl H."/>
            <person name="Himmelbauer H."/>
            <person name="Lehrach H."/>
            <person name="Jacob H.J."/>
            <person name="Bromberg S."/>
            <person name="Gullings-Handley J."/>
            <person name="Jensen-Seaman M.I."/>
            <person name="Kwitek A.E."/>
            <person name="Lazar J."/>
            <person name="Pasko D."/>
            <person name="Tonellato P.J."/>
            <person name="Twigger S."/>
            <person name="Ponting C.P."/>
            <person name="Duarte J.M."/>
            <person name="Rice S."/>
            <person name="Goodstadt L."/>
            <person name="Beatson S.A."/>
            <person name="Emes R.D."/>
            <person name="Winter E.E."/>
            <person name="Webber C."/>
            <person name="Brandt P."/>
            <person name="Nyakatura G."/>
            <person name="Adetobi M."/>
            <person name="Chiaromonte F."/>
            <person name="Elnitski L."/>
            <person name="Eswara P."/>
            <person name="Hardison R.C."/>
            <person name="Hou M."/>
            <person name="Kolbe D."/>
            <person name="Makova K."/>
            <person name="Miller W."/>
            <person name="Nekrutenko A."/>
            <person name="Riemer C."/>
            <person name="Schwartz S."/>
            <person name="Taylor J."/>
            <person name="Yang S."/>
            <person name="Zhang Y."/>
            <person name="Lindpaintner K."/>
            <person name="Andrews T.D."/>
            <person name="Caccamo M."/>
            <person name="Clamp M."/>
            <person name="Clarke L."/>
            <person name="Curwen V."/>
            <person name="Durbin R.M."/>
            <person name="Eyras E."/>
            <person name="Searle S.M."/>
            <person name="Cooper G.M."/>
            <person name="Batzoglou S."/>
            <person name="Brudno M."/>
            <person name="Sidow A."/>
            <person name="Stone E.A."/>
            <person name="Payseur B.A."/>
            <person name="Bourque G."/>
            <person name="Lopez-Otin C."/>
            <person name="Puente X.S."/>
            <person name="Chakrabarti K."/>
            <person name="Chatterji S."/>
            <person name="Dewey C."/>
            <person name="Pachter L."/>
            <person name="Bray N."/>
            <person name="Yap V.B."/>
            <person name="Caspi A."/>
            <person name="Tesler G."/>
            <person name="Pevzner P.A."/>
            <person name="Haussler D."/>
            <person name="Roskin K.M."/>
            <person name="Baertsch R."/>
            <person name="Clawson H."/>
            <person name="Furey T.S."/>
            <person name="Hinrichs A.S."/>
            <person name="Karolchik D."/>
            <person name="Kent W.J."/>
            <person name="Rosenbloom K.R."/>
            <person name="Trumbower H."/>
            <person name="Weirauch M."/>
            <person name="Cooper D.N."/>
            <person name="Stenson P.D."/>
            <person name="Ma B."/>
            <person name="Brent M."/>
            <person name="Arumugam M."/>
            <person name="Shteynberg D."/>
            <person name="Copley R.R."/>
            <person name="Taylor M.S."/>
            <person name="Riethman H."/>
            <person name="Mudunuri U."/>
            <person name="Peterson J."/>
            <person name="Guyer M."/>
            <person name="Felsenfeld A."/>
            <person name="Old S."/>
            <person name="Mockrin S."/>
            <person name="Collins F.S."/>
        </authorList>
    </citation>
    <scope>NUCLEOTIDE SEQUENCE [LARGE SCALE GENOMIC DNA]</scope>
    <source>
        <strain>Brown Norway</strain>
    </source>
</reference>
<reference key="2">
    <citation type="submission" date="2005-07" db="EMBL/GenBank/DDBJ databases">
        <authorList>
            <person name="Mural R.J."/>
            <person name="Adams M.D."/>
            <person name="Myers E.W."/>
            <person name="Smith H.O."/>
            <person name="Venter J.C."/>
        </authorList>
    </citation>
    <scope>NUCLEOTIDE SEQUENCE [LARGE SCALE GENOMIC DNA]</scope>
</reference>
<reference key="3">
    <citation type="journal article" date="1996" name="J. Mol. Neurosci.">
        <title>Alternative splicing of the Brn-3a and Brn-3b transcription factor RNAs is regulated in neuronal cells.</title>
        <authorList>
            <person name="Liu Y.Z."/>
            <person name="Dawson S.J."/>
            <person name="Latchman D.S."/>
        </authorList>
    </citation>
    <scope>TISSUE SPECIFICITY</scope>
</reference>
<reference key="4">
    <citation type="journal article" date="2008" name="Cell Stress Chaperones">
        <title>Cardiac expression of Brn-3a and Brn-3b POU transcription factors and regulation of Hsp27 gene expression.</title>
        <authorList>
            <person name="Farooqui-Kabir S.R."/>
            <person name="Diss J.K."/>
            <person name="Henderson D."/>
            <person name="Marber M.S."/>
            <person name="Latchman D.S."/>
            <person name="Budhram-Mahadeo V."/>
            <person name="Heads R.J."/>
        </authorList>
    </citation>
    <scope>SUBCELLULAR LOCATION</scope>
    <scope>TISSUE SPECIFICITY</scope>
</reference>
<keyword id="KW-0010">Activator</keyword>
<keyword id="KW-0053">Apoptosis</keyword>
<keyword id="KW-0963">Cytoplasm</keyword>
<keyword id="KW-0217">Developmental protein</keyword>
<keyword id="KW-0221">Differentiation</keyword>
<keyword id="KW-0238">DNA-binding</keyword>
<keyword id="KW-0371">Homeobox</keyword>
<keyword id="KW-0539">Nucleus</keyword>
<keyword id="KW-1185">Reference proteome</keyword>
<keyword id="KW-0678">Repressor</keyword>
<keyword id="KW-0804">Transcription</keyword>
<keyword id="KW-0805">Transcription regulation</keyword>
<name>PO4F2_RAT</name>
<gene>
    <name evidence="10" type="primary">Pou4f2</name>
    <name evidence="8" type="synonym">Brn3b</name>
</gene>
<comment type="function">
    <text evidence="2">Tissue-specific DNA-binding transcription factor involved in the development and differentiation of target cells. Functions either as activator or repressor modulating the rate of target gene transcription through RNA polymerase II enzyme in a promoter-dependent manner. Binds to the consensus octamer motif 5'-AT[A/T]A[T/A]T[A/T]A-3' of promoter of target genes. Plays a fundamental role in the gene regulatory network essential for retinal ganglion cell (RGC) differentiation. Binds to an octamer site to form a ternary complex with ISL1; cooperates positively with ISL1 and ISL2 to potentiate transcriptional activation of RGC target genes being involved in RGC fate commitment in the developing retina and RGC axon formation and pathfinding. Inhibits DLX1 and DLX2 transcriptional activities preventing DLX1- and DLX2-mediated ability to promote amacrine cell fate specification. In cooperation with TP53 potentiates transcriptional activation of BAX promoter activity increasing neuronal cell apoptosis. Negatively regulates BAX promoter activity in the absence of TP53. Acts as a transcriptional coactivator via its interaction with the transcription factor ESR1 by enhancing its effect on estrogen response element (ERE)-containing promoter. Antagonizes the transcriptional stimulatory activity of POU4F1 by preventing its binding to an octamer motif. Involved in TNFSF11-mediated terminal osteoclast differentiation.</text>
</comment>
<comment type="subunit">
    <text evidence="2">Interacts with POU4F1; this interaction inhibits both POU4F1 DNA-binding and transcriptional activities. Interacts (C-terminus) with ESR1 (via DNA-binding domain); this interaction increases the estrogen receptor ESR1 transcriptional activity in a DNA- and ligand 17-beta-estradiol-independent manner. Interacts (via C-terminus) with TP53 (via N-terminus). Interacts with DLX1 (via homeobox DNA-binding domain); this interaction suppresses DLX1-mediated transcriptional activity in postnatal retina enhancing retinal ganglion cell (RGC) differentiation. Interacts with DLX2 (via homeobox DNA-binding domain); this interaction enhances RGC differentiation. Interacts (via C-terminus) with ISL1 (via C-terminus). Interacts with ISL2. Interacts with LHX2.</text>
</comment>
<comment type="subcellular location">
    <subcellularLocation>
        <location evidence="6">Nucleus</location>
    </subcellularLocation>
    <subcellularLocation>
        <location evidence="1">Nucleus speckle</location>
    </subcellularLocation>
    <subcellularLocation>
        <location evidence="2">Cytoplasm</location>
    </subcellularLocation>
</comment>
<comment type="tissue specificity">
    <text evidence="6 7">Expressed in the heart, brain and spinal cord (PubMed:18368538, PubMed:8835784). Expressed in cardiomyocytes (at protein level) (PubMed:18368538). Expressed in brain and spinal cord (PubMed:18368538, PubMed:8835784). Expressed in dorsal root ganglion (RGD) neurons (PubMed:8835784).</text>
</comment>
<comment type="domain">
    <text evidence="2">The N-terminal transcriptional activation region is sufficient to induce transcriptional activity.</text>
</comment>
<comment type="domain">
    <text evidence="2">The POU-specific domain and POU homeodomain regions are necessary for DNA-binding activity and transcriptional repression.</text>
</comment>
<comment type="domain">
    <text evidence="1">The polyhistidine motif acts as a targeting signal to nuclear speckles.</text>
</comment>
<comment type="similarity">
    <text evidence="9">Belongs to the POU transcription factor family. Class-4 subfamily.</text>
</comment>
<organism>
    <name type="scientific">Rattus norvegicus</name>
    <name type="common">Rat</name>
    <dbReference type="NCBI Taxonomy" id="10116"/>
    <lineage>
        <taxon>Eukaryota</taxon>
        <taxon>Metazoa</taxon>
        <taxon>Chordata</taxon>
        <taxon>Craniata</taxon>
        <taxon>Vertebrata</taxon>
        <taxon>Euteleostomi</taxon>
        <taxon>Mammalia</taxon>
        <taxon>Eutheria</taxon>
        <taxon>Euarchontoglires</taxon>
        <taxon>Glires</taxon>
        <taxon>Rodentia</taxon>
        <taxon>Myomorpha</taxon>
        <taxon>Muroidea</taxon>
        <taxon>Muridae</taxon>
        <taxon>Murinae</taxon>
        <taxon>Rattus</taxon>
    </lineage>
</organism>
<protein>
    <recommendedName>
        <fullName evidence="9">POU domain, class 4, transcription factor 2</fullName>
    </recommendedName>
    <alternativeName>
        <fullName>Brain-specific homeobox/POU domain protein 3B</fullName>
        <shortName>Brain-3B</shortName>
        <shortName>Brn-3B</shortName>
    </alternativeName>
    <alternativeName>
        <fullName>Brn-3.2</fullName>
    </alternativeName>
</protein>
<dbReference type="EMBL" id="AABR07043626">
    <property type="status" value="NOT_ANNOTATED_CDS"/>
    <property type="molecule type" value="Genomic_DNA"/>
</dbReference>
<dbReference type="EMBL" id="CH473972">
    <property type="protein sequence ID" value="EDL92324.1"/>
    <property type="molecule type" value="Genomic_DNA"/>
</dbReference>
<dbReference type="RefSeq" id="NP_599182.1">
    <property type="nucleotide sequence ID" value="NM_134355.1"/>
</dbReference>
<dbReference type="SMR" id="G3V7L5"/>
<dbReference type="FunCoup" id="G3V7L5">
    <property type="interactions" value="344"/>
</dbReference>
<dbReference type="STRING" id="10116.ENSRNOP00000016422"/>
<dbReference type="GlyGen" id="G3V7L5">
    <property type="glycosylation" value="1 site"/>
</dbReference>
<dbReference type="PhosphoSitePlus" id="G3V7L5"/>
<dbReference type="PaxDb" id="10116-ENSRNOP00000016422"/>
<dbReference type="Ensembl" id="ENSRNOT00000016422.6">
    <property type="protein sequence ID" value="ENSRNOP00000016422.3"/>
    <property type="gene ID" value="ENSRNOG00000012167.6"/>
</dbReference>
<dbReference type="GeneID" id="171355"/>
<dbReference type="KEGG" id="rno:171355"/>
<dbReference type="AGR" id="RGD:620075"/>
<dbReference type="CTD" id="5458"/>
<dbReference type="RGD" id="620075">
    <property type="gene designation" value="Pou4f2"/>
</dbReference>
<dbReference type="eggNOG" id="KOG1168">
    <property type="taxonomic scope" value="Eukaryota"/>
</dbReference>
<dbReference type="GeneTree" id="ENSGT00940000160339"/>
<dbReference type="HOGENOM" id="CLU_013065_0_0_1"/>
<dbReference type="InParanoid" id="G3V7L5"/>
<dbReference type="OMA" id="ETMRRAC"/>
<dbReference type="OrthoDB" id="6358449at2759"/>
<dbReference type="TreeFam" id="TF316413"/>
<dbReference type="Reactome" id="R-RNO-6804759">
    <property type="pathway name" value="Regulation of TP53 Activity through Association with Co-factors"/>
</dbReference>
<dbReference type="PRO" id="PR:G3V7L5"/>
<dbReference type="Proteomes" id="UP000002494">
    <property type="component" value="Chromosome 19"/>
</dbReference>
<dbReference type="Proteomes" id="UP000234681">
    <property type="component" value="Chromosome 19"/>
</dbReference>
<dbReference type="Bgee" id="ENSRNOG00000012167">
    <property type="expression patterns" value="Expressed in cerebellum"/>
</dbReference>
<dbReference type="GO" id="GO:0005737">
    <property type="term" value="C:cytoplasm"/>
    <property type="evidence" value="ECO:0000250"/>
    <property type="project" value="UniProtKB"/>
</dbReference>
<dbReference type="GO" id="GO:0000791">
    <property type="term" value="C:euchromatin"/>
    <property type="evidence" value="ECO:0000266"/>
    <property type="project" value="RGD"/>
</dbReference>
<dbReference type="GO" id="GO:0016607">
    <property type="term" value="C:nuclear speck"/>
    <property type="evidence" value="ECO:0000250"/>
    <property type="project" value="UniProtKB"/>
</dbReference>
<dbReference type="GO" id="GO:0005634">
    <property type="term" value="C:nucleus"/>
    <property type="evidence" value="ECO:0000250"/>
    <property type="project" value="UniProtKB"/>
</dbReference>
<dbReference type="GO" id="GO:0005667">
    <property type="term" value="C:transcription regulator complex"/>
    <property type="evidence" value="ECO:0000266"/>
    <property type="project" value="RGD"/>
</dbReference>
<dbReference type="GO" id="GO:0003682">
    <property type="term" value="F:chromatin binding"/>
    <property type="evidence" value="ECO:0000266"/>
    <property type="project" value="RGD"/>
</dbReference>
<dbReference type="GO" id="GO:0001228">
    <property type="term" value="F:DNA-binding transcription activator activity, RNA polymerase II-specific"/>
    <property type="evidence" value="ECO:0000250"/>
    <property type="project" value="UniProtKB"/>
</dbReference>
<dbReference type="GO" id="GO:0000981">
    <property type="term" value="F:DNA-binding transcription factor activity, RNA polymerase II-specific"/>
    <property type="evidence" value="ECO:0000250"/>
    <property type="project" value="UniProtKB"/>
</dbReference>
<dbReference type="GO" id="GO:0001227">
    <property type="term" value="F:DNA-binding transcription repressor activity, RNA polymerase II-specific"/>
    <property type="evidence" value="ECO:0000266"/>
    <property type="project" value="RGD"/>
</dbReference>
<dbReference type="GO" id="GO:0002039">
    <property type="term" value="F:p53 binding"/>
    <property type="evidence" value="ECO:0000266"/>
    <property type="project" value="RGD"/>
</dbReference>
<dbReference type="GO" id="GO:1990841">
    <property type="term" value="F:promoter-specific chromatin binding"/>
    <property type="evidence" value="ECO:0000250"/>
    <property type="project" value="UniProtKB"/>
</dbReference>
<dbReference type="GO" id="GO:0000978">
    <property type="term" value="F:RNA polymerase II cis-regulatory region sequence-specific DNA binding"/>
    <property type="evidence" value="ECO:0000266"/>
    <property type="project" value="RGD"/>
</dbReference>
<dbReference type="GO" id="GO:0000977">
    <property type="term" value="F:RNA polymerase II transcription regulatory region sequence-specific DNA binding"/>
    <property type="evidence" value="ECO:0000266"/>
    <property type="project" value="RGD"/>
</dbReference>
<dbReference type="GO" id="GO:0043565">
    <property type="term" value="F:sequence-specific DNA binding"/>
    <property type="evidence" value="ECO:0000250"/>
    <property type="project" value="UniProtKB"/>
</dbReference>
<dbReference type="GO" id="GO:0048675">
    <property type="term" value="P:axon extension"/>
    <property type="evidence" value="ECO:0000266"/>
    <property type="project" value="RGD"/>
</dbReference>
<dbReference type="GO" id="GO:0007411">
    <property type="term" value="P:axon guidance"/>
    <property type="evidence" value="ECO:0000266"/>
    <property type="project" value="RGD"/>
</dbReference>
<dbReference type="GO" id="GO:0007409">
    <property type="term" value="P:axonogenesis"/>
    <property type="evidence" value="ECO:0000266"/>
    <property type="project" value="RGD"/>
</dbReference>
<dbReference type="GO" id="GO:0071345">
    <property type="term" value="P:cellular response to cytokine stimulus"/>
    <property type="evidence" value="ECO:0000250"/>
    <property type="project" value="UniProtKB"/>
</dbReference>
<dbReference type="GO" id="GO:0071392">
    <property type="term" value="P:cellular response to estradiol stimulus"/>
    <property type="evidence" value="ECO:0000250"/>
    <property type="project" value="UniProtKB"/>
</dbReference>
<dbReference type="GO" id="GO:0032869">
    <property type="term" value="P:cellular response to insulin stimulus"/>
    <property type="evidence" value="ECO:0000266"/>
    <property type="project" value="RGD"/>
</dbReference>
<dbReference type="GO" id="GO:0071453">
    <property type="term" value="P:cellular response to oxygen levels"/>
    <property type="evidence" value="ECO:0000315"/>
    <property type="project" value="BHF-UCL"/>
</dbReference>
<dbReference type="GO" id="GO:1990791">
    <property type="term" value="P:dorsal root ganglion development"/>
    <property type="evidence" value="ECO:0000250"/>
    <property type="project" value="UniProtKB"/>
</dbReference>
<dbReference type="GO" id="GO:0030520">
    <property type="term" value="P:estrogen receptor signaling pathway"/>
    <property type="evidence" value="ECO:0000266"/>
    <property type="project" value="RGD"/>
</dbReference>
<dbReference type="GO" id="GO:0007507">
    <property type="term" value="P:heart development"/>
    <property type="evidence" value="ECO:0000266"/>
    <property type="project" value="RGD"/>
</dbReference>
<dbReference type="GO" id="GO:0072332">
    <property type="term" value="P:intrinsic apoptotic signaling pathway by p53 class mediator"/>
    <property type="evidence" value="ECO:0000250"/>
    <property type="project" value="UniProtKB"/>
</dbReference>
<dbReference type="GO" id="GO:0000165">
    <property type="term" value="P:MAPK cascade"/>
    <property type="evidence" value="ECO:0000266"/>
    <property type="project" value="RGD"/>
</dbReference>
<dbReference type="GO" id="GO:1904178">
    <property type="term" value="P:negative regulation of adipose tissue development"/>
    <property type="evidence" value="ECO:0000266"/>
    <property type="project" value="RGD"/>
</dbReference>
<dbReference type="GO" id="GO:1902870">
    <property type="term" value="P:negative regulation of amacrine cell differentiation"/>
    <property type="evidence" value="ECO:0000250"/>
    <property type="project" value="UniProtKB"/>
</dbReference>
<dbReference type="GO" id="GO:0045596">
    <property type="term" value="P:negative regulation of cell differentiation"/>
    <property type="evidence" value="ECO:0000250"/>
    <property type="project" value="UniProtKB"/>
</dbReference>
<dbReference type="GO" id="GO:0043433">
    <property type="term" value="P:negative regulation of DNA-binding transcription factor activity"/>
    <property type="evidence" value="ECO:0000250"/>
    <property type="project" value="UniProtKB"/>
</dbReference>
<dbReference type="GO" id="GO:0000122">
    <property type="term" value="P:negative regulation of transcription by RNA polymerase II"/>
    <property type="evidence" value="ECO:0000266"/>
    <property type="project" value="RGD"/>
</dbReference>
<dbReference type="GO" id="GO:0050885">
    <property type="term" value="P:neuromuscular process controlling balance"/>
    <property type="evidence" value="ECO:0000266"/>
    <property type="project" value="RGD"/>
</dbReference>
<dbReference type="GO" id="GO:0030182">
    <property type="term" value="P:neuron differentiation"/>
    <property type="evidence" value="ECO:0000266"/>
    <property type="project" value="RGD"/>
</dbReference>
<dbReference type="GO" id="GO:0045773">
    <property type="term" value="P:positive regulation of axon extension"/>
    <property type="evidence" value="ECO:0000250"/>
    <property type="project" value="UniProtKB"/>
</dbReference>
<dbReference type="GO" id="GO:0010666">
    <property type="term" value="P:positive regulation of cardiac muscle cell apoptotic process"/>
    <property type="evidence" value="ECO:0000315"/>
    <property type="project" value="BHF-UCL"/>
</dbReference>
<dbReference type="GO" id="GO:0045597">
    <property type="term" value="P:positive regulation of cell differentiation"/>
    <property type="evidence" value="ECO:0000250"/>
    <property type="project" value="UniProtKB"/>
</dbReference>
<dbReference type="GO" id="GO:0046326">
    <property type="term" value="P:positive regulation of D-glucose import"/>
    <property type="evidence" value="ECO:0000266"/>
    <property type="project" value="RGD"/>
</dbReference>
<dbReference type="GO" id="GO:0045672">
    <property type="term" value="P:positive regulation of osteoclast differentiation"/>
    <property type="evidence" value="ECO:0000250"/>
    <property type="project" value="UniProtKB"/>
</dbReference>
<dbReference type="GO" id="GO:0043068">
    <property type="term" value="P:positive regulation of programmed cell death"/>
    <property type="evidence" value="ECO:0000250"/>
    <property type="project" value="UniProtKB"/>
</dbReference>
<dbReference type="GO" id="GO:0045944">
    <property type="term" value="P:positive regulation of transcription by RNA polymerase II"/>
    <property type="evidence" value="ECO:0000250"/>
    <property type="project" value="UniProtKB"/>
</dbReference>
<dbReference type="GO" id="GO:2000679">
    <property type="term" value="P:positive regulation of transcription regulatory region DNA binding"/>
    <property type="evidence" value="ECO:0000250"/>
    <property type="project" value="UniProtKB"/>
</dbReference>
<dbReference type="GO" id="GO:0051090">
    <property type="term" value="P:regulation of DNA-binding transcription factor activity"/>
    <property type="evidence" value="ECO:0000250"/>
    <property type="project" value="UniProtKB"/>
</dbReference>
<dbReference type="GO" id="GO:0010468">
    <property type="term" value="P:regulation of gene expression"/>
    <property type="evidence" value="ECO:0000315"/>
    <property type="project" value="BHF-UCL"/>
</dbReference>
<dbReference type="GO" id="GO:0090259">
    <property type="term" value="P:regulation of retinal ganglion cell axon guidance"/>
    <property type="evidence" value="ECO:0000250"/>
    <property type="project" value="UniProtKB"/>
</dbReference>
<dbReference type="GO" id="GO:0006357">
    <property type="term" value="P:regulation of transcription by RNA polymerase II"/>
    <property type="evidence" value="ECO:0000318"/>
    <property type="project" value="GO_Central"/>
</dbReference>
<dbReference type="GO" id="GO:0060041">
    <property type="term" value="P:retina development in camera-type eye"/>
    <property type="evidence" value="ECO:0000266"/>
    <property type="project" value="RGD"/>
</dbReference>
<dbReference type="GO" id="GO:0031290">
    <property type="term" value="P:retinal ganglion cell axon guidance"/>
    <property type="evidence" value="ECO:0000266"/>
    <property type="project" value="RGD"/>
</dbReference>
<dbReference type="GO" id="GO:0007605">
    <property type="term" value="P:sensory perception of sound"/>
    <property type="evidence" value="ECO:0000266"/>
    <property type="project" value="RGD"/>
</dbReference>
<dbReference type="GO" id="GO:0007283">
    <property type="term" value="P:spermatogenesis"/>
    <property type="evidence" value="ECO:0000270"/>
    <property type="project" value="RGD"/>
</dbReference>
<dbReference type="CDD" id="cd00086">
    <property type="entry name" value="homeodomain"/>
    <property type="match status" value="1"/>
</dbReference>
<dbReference type="FunFam" id="1.10.10.60:FF:000056">
    <property type="entry name" value="POU domain protein"/>
    <property type="match status" value="1"/>
</dbReference>
<dbReference type="FunFam" id="1.10.260.40:FF:000007">
    <property type="entry name" value="POU domain protein"/>
    <property type="match status" value="1"/>
</dbReference>
<dbReference type="Gene3D" id="1.10.10.60">
    <property type="entry name" value="Homeodomain-like"/>
    <property type="match status" value="1"/>
</dbReference>
<dbReference type="Gene3D" id="1.10.260.40">
    <property type="entry name" value="lambda repressor-like DNA-binding domains"/>
    <property type="match status" value="1"/>
</dbReference>
<dbReference type="InterPro" id="IPR001356">
    <property type="entry name" value="HD"/>
</dbReference>
<dbReference type="InterPro" id="IPR017970">
    <property type="entry name" value="Homeobox_CS"/>
</dbReference>
<dbReference type="InterPro" id="IPR009057">
    <property type="entry name" value="Homeodomain-like_sf"/>
</dbReference>
<dbReference type="InterPro" id="IPR010982">
    <property type="entry name" value="Lambda_DNA-bd_dom_sf"/>
</dbReference>
<dbReference type="InterPro" id="IPR013847">
    <property type="entry name" value="POU"/>
</dbReference>
<dbReference type="InterPro" id="IPR000327">
    <property type="entry name" value="POU_dom"/>
</dbReference>
<dbReference type="InterPro" id="IPR050255">
    <property type="entry name" value="POU_domain_TF"/>
</dbReference>
<dbReference type="PANTHER" id="PTHR11636">
    <property type="entry name" value="POU DOMAIN"/>
    <property type="match status" value="1"/>
</dbReference>
<dbReference type="PANTHER" id="PTHR11636:SF41">
    <property type="entry name" value="POU DOMAIN, CLASS 4, TRANSCRIPTION FACTOR 2"/>
    <property type="match status" value="1"/>
</dbReference>
<dbReference type="Pfam" id="PF00046">
    <property type="entry name" value="Homeodomain"/>
    <property type="match status" value="1"/>
</dbReference>
<dbReference type="Pfam" id="PF00157">
    <property type="entry name" value="Pou"/>
    <property type="match status" value="1"/>
</dbReference>
<dbReference type="PRINTS" id="PR00028">
    <property type="entry name" value="POUDOMAIN"/>
</dbReference>
<dbReference type="SMART" id="SM00389">
    <property type="entry name" value="HOX"/>
    <property type="match status" value="1"/>
</dbReference>
<dbReference type="SMART" id="SM00352">
    <property type="entry name" value="POU"/>
    <property type="match status" value="1"/>
</dbReference>
<dbReference type="SUPFAM" id="SSF46689">
    <property type="entry name" value="Homeodomain-like"/>
    <property type="match status" value="1"/>
</dbReference>
<dbReference type="SUPFAM" id="SSF47413">
    <property type="entry name" value="lambda repressor-like DNA-binding domains"/>
    <property type="match status" value="1"/>
</dbReference>
<dbReference type="PROSITE" id="PS00027">
    <property type="entry name" value="HOMEOBOX_1"/>
    <property type="match status" value="1"/>
</dbReference>
<dbReference type="PROSITE" id="PS50071">
    <property type="entry name" value="HOMEOBOX_2"/>
    <property type="match status" value="1"/>
</dbReference>
<dbReference type="PROSITE" id="PS00035">
    <property type="entry name" value="POU_1"/>
    <property type="match status" value="1"/>
</dbReference>
<dbReference type="PROSITE" id="PS00465">
    <property type="entry name" value="POU_2"/>
    <property type="match status" value="1"/>
</dbReference>
<dbReference type="PROSITE" id="PS51179">
    <property type="entry name" value="POU_3"/>
    <property type="match status" value="1"/>
</dbReference>